<comment type="function">
    <text evidence="1">Catalyzes the phosphorylation of riboflavin (vitamin B2) to form flavin mononucleotide (FMN) coenzyme.</text>
</comment>
<comment type="catalytic activity">
    <reaction>
        <text>riboflavin + ATP = FMN + ADP + H(+)</text>
        <dbReference type="Rhea" id="RHEA:14357"/>
        <dbReference type="ChEBI" id="CHEBI:15378"/>
        <dbReference type="ChEBI" id="CHEBI:30616"/>
        <dbReference type="ChEBI" id="CHEBI:57986"/>
        <dbReference type="ChEBI" id="CHEBI:58210"/>
        <dbReference type="ChEBI" id="CHEBI:456216"/>
        <dbReference type="EC" id="2.7.1.26"/>
    </reaction>
</comment>
<comment type="cofactor">
    <cofactor evidence="1">
        <name>Zn(2+)</name>
        <dbReference type="ChEBI" id="CHEBI:29105"/>
    </cofactor>
    <cofactor evidence="1">
        <name>Mg(2+)</name>
        <dbReference type="ChEBI" id="CHEBI:18420"/>
    </cofactor>
    <text evidence="1">Zinc or magnesium.</text>
</comment>
<comment type="pathway">
    <text>Cofactor biosynthesis; FMN biosynthesis; FMN from riboflavin (ATP route): step 1/1.</text>
</comment>
<comment type="similarity">
    <text evidence="4">Belongs to the flavokinase family.</text>
</comment>
<keyword id="KW-0067">ATP-binding</keyword>
<keyword id="KW-0285">Flavoprotein</keyword>
<keyword id="KW-0288">FMN</keyword>
<keyword id="KW-0418">Kinase</keyword>
<keyword id="KW-0460">Magnesium</keyword>
<keyword id="KW-0479">Metal-binding</keyword>
<keyword id="KW-0547">Nucleotide-binding</keyword>
<keyword id="KW-1185">Reference proteome</keyword>
<keyword id="KW-0808">Transferase</keyword>
<keyword id="KW-0862">Zinc</keyword>
<sequence>MRPSNPRPPVTGPDSGPEAPFPIRLSGPVIKGFGRGSKELGIPTANIPVDGLEEVLPKELGVGVYYGVVALDPATAPAPSSSDSTSGDAAPILPAVLSIGYNPYYKNKTRSIEIHIMPSLTLPSPTAPSEEKEKVKFHKLPDFYGTKLNLLMLGYIRPEYDYVSMEALVEDIRIDCEVARASLLRPAYRVYLDGNEDETVSAQRDWLRSF</sequence>
<feature type="chain" id="PRO_0000301841" description="Riboflavin kinase">
    <location>
        <begin position="1"/>
        <end position="210"/>
    </location>
</feature>
<feature type="region of interest" description="Disordered" evidence="3">
    <location>
        <begin position="1"/>
        <end position="24"/>
    </location>
</feature>
<feature type="compositionally biased region" description="Pro residues" evidence="3">
    <location>
        <begin position="1"/>
        <end position="11"/>
    </location>
</feature>
<feature type="active site" description="Nucleophile" evidence="1">
    <location>
        <position position="113"/>
    </location>
</feature>
<feature type="binding site" evidence="2">
    <location>
        <position position="44"/>
    </location>
    <ligand>
        <name>Mg(2+)</name>
        <dbReference type="ChEBI" id="CHEBI:18420"/>
    </ligand>
</feature>
<feature type="binding site" evidence="2">
    <location>
        <position position="46"/>
    </location>
    <ligand>
        <name>Mg(2+)</name>
        <dbReference type="ChEBI" id="CHEBI:18420"/>
    </ligand>
</feature>
<evidence type="ECO:0000250" key="1"/>
<evidence type="ECO:0000250" key="2">
    <source>
        <dbReference type="UniProtKB" id="Q969G6"/>
    </source>
</evidence>
<evidence type="ECO:0000256" key="3">
    <source>
        <dbReference type="SAM" id="MobiDB-lite"/>
    </source>
</evidence>
<evidence type="ECO:0000305" key="4"/>
<name>RIFK_EMENI</name>
<accession>Q5AW61</accession>
<accession>C8VBE5</accession>
<dbReference type="EC" id="2.7.1.26"/>
<dbReference type="EMBL" id="AACD01000129">
    <property type="protein sequence ID" value="EAA62049.1"/>
    <property type="molecule type" value="Genomic_DNA"/>
</dbReference>
<dbReference type="EMBL" id="BN001304">
    <property type="protein sequence ID" value="CBF79442.1"/>
    <property type="molecule type" value="Genomic_DNA"/>
</dbReference>
<dbReference type="RefSeq" id="XP_680738.1">
    <property type="nucleotide sequence ID" value="XM_675646.1"/>
</dbReference>
<dbReference type="SMR" id="Q5AW61"/>
<dbReference type="FunCoup" id="Q5AW61">
    <property type="interactions" value="364"/>
</dbReference>
<dbReference type="STRING" id="227321.Q5AW61"/>
<dbReference type="EnsemblFungi" id="CBF79442">
    <property type="protein sequence ID" value="CBF79442"/>
    <property type="gene ID" value="ANIA_07469"/>
</dbReference>
<dbReference type="KEGG" id="ani:ANIA_07469"/>
<dbReference type="eggNOG" id="KOG3110">
    <property type="taxonomic scope" value="Eukaryota"/>
</dbReference>
<dbReference type="HOGENOM" id="CLU_048437_3_2_1"/>
<dbReference type="InParanoid" id="Q5AW61"/>
<dbReference type="OMA" id="FDCEVAR"/>
<dbReference type="OrthoDB" id="276388at2759"/>
<dbReference type="UniPathway" id="UPA00276">
    <property type="reaction ID" value="UER00406"/>
</dbReference>
<dbReference type="Proteomes" id="UP000000560">
    <property type="component" value="Chromosome IV"/>
</dbReference>
<dbReference type="GO" id="GO:0005739">
    <property type="term" value="C:mitochondrion"/>
    <property type="evidence" value="ECO:0000318"/>
    <property type="project" value="GO_Central"/>
</dbReference>
<dbReference type="GO" id="GO:0005524">
    <property type="term" value="F:ATP binding"/>
    <property type="evidence" value="ECO:0007669"/>
    <property type="project" value="UniProtKB-KW"/>
</dbReference>
<dbReference type="GO" id="GO:0046872">
    <property type="term" value="F:metal ion binding"/>
    <property type="evidence" value="ECO:0007669"/>
    <property type="project" value="UniProtKB-KW"/>
</dbReference>
<dbReference type="GO" id="GO:0008531">
    <property type="term" value="F:riboflavin kinase activity"/>
    <property type="evidence" value="ECO:0000318"/>
    <property type="project" value="GO_Central"/>
</dbReference>
<dbReference type="GO" id="GO:0009398">
    <property type="term" value="P:FMN biosynthetic process"/>
    <property type="evidence" value="ECO:0000318"/>
    <property type="project" value="GO_Central"/>
</dbReference>
<dbReference type="GO" id="GO:0009231">
    <property type="term" value="P:riboflavin biosynthetic process"/>
    <property type="evidence" value="ECO:0007669"/>
    <property type="project" value="InterPro"/>
</dbReference>
<dbReference type="GO" id="GO:0006771">
    <property type="term" value="P:riboflavin metabolic process"/>
    <property type="evidence" value="ECO:0000318"/>
    <property type="project" value="GO_Central"/>
</dbReference>
<dbReference type="FunFam" id="2.40.30.30:FF:000008">
    <property type="entry name" value="Riboflavin kinase"/>
    <property type="match status" value="1"/>
</dbReference>
<dbReference type="Gene3D" id="2.40.30.30">
    <property type="entry name" value="Riboflavin kinase-like"/>
    <property type="match status" value="1"/>
</dbReference>
<dbReference type="InterPro" id="IPR023468">
    <property type="entry name" value="Riboflavin_kinase"/>
</dbReference>
<dbReference type="InterPro" id="IPR015865">
    <property type="entry name" value="Riboflavin_kinase_bac/euk"/>
</dbReference>
<dbReference type="InterPro" id="IPR023465">
    <property type="entry name" value="Riboflavin_kinase_dom_sf"/>
</dbReference>
<dbReference type="PANTHER" id="PTHR22749:SF6">
    <property type="entry name" value="RIBOFLAVIN KINASE"/>
    <property type="match status" value="1"/>
</dbReference>
<dbReference type="PANTHER" id="PTHR22749">
    <property type="entry name" value="RIBOFLAVIN KINASE/FMN ADENYLYLTRANSFERASE"/>
    <property type="match status" value="1"/>
</dbReference>
<dbReference type="Pfam" id="PF01687">
    <property type="entry name" value="Flavokinase"/>
    <property type="match status" value="1"/>
</dbReference>
<dbReference type="SMART" id="SM00904">
    <property type="entry name" value="Flavokinase"/>
    <property type="match status" value="1"/>
</dbReference>
<dbReference type="SUPFAM" id="SSF82114">
    <property type="entry name" value="Riboflavin kinase-like"/>
    <property type="match status" value="1"/>
</dbReference>
<protein>
    <recommendedName>
        <fullName>Riboflavin kinase</fullName>
        <ecNumber>2.7.1.26</ecNumber>
    </recommendedName>
    <alternativeName>
        <fullName>Flavin mononucleotide kinase 1</fullName>
    </alternativeName>
</protein>
<organism>
    <name type="scientific">Emericella nidulans (strain FGSC A4 / ATCC 38163 / CBS 112.46 / NRRL 194 / M139)</name>
    <name type="common">Aspergillus nidulans</name>
    <dbReference type="NCBI Taxonomy" id="227321"/>
    <lineage>
        <taxon>Eukaryota</taxon>
        <taxon>Fungi</taxon>
        <taxon>Dikarya</taxon>
        <taxon>Ascomycota</taxon>
        <taxon>Pezizomycotina</taxon>
        <taxon>Eurotiomycetes</taxon>
        <taxon>Eurotiomycetidae</taxon>
        <taxon>Eurotiales</taxon>
        <taxon>Aspergillaceae</taxon>
        <taxon>Aspergillus</taxon>
        <taxon>Aspergillus subgen. Nidulantes</taxon>
    </lineage>
</organism>
<gene>
    <name type="primary">fmn1</name>
    <name type="ORF">AN7469</name>
</gene>
<reference key="1">
    <citation type="journal article" date="2005" name="Nature">
        <title>Sequencing of Aspergillus nidulans and comparative analysis with A. fumigatus and A. oryzae.</title>
        <authorList>
            <person name="Galagan J.E."/>
            <person name="Calvo S.E."/>
            <person name="Cuomo C."/>
            <person name="Ma L.-J."/>
            <person name="Wortman J.R."/>
            <person name="Batzoglou S."/>
            <person name="Lee S.-I."/>
            <person name="Bastuerkmen M."/>
            <person name="Spevak C.C."/>
            <person name="Clutterbuck J."/>
            <person name="Kapitonov V."/>
            <person name="Jurka J."/>
            <person name="Scazzocchio C."/>
            <person name="Farman M.L."/>
            <person name="Butler J."/>
            <person name="Purcell S."/>
            <person name="Harris S."/>
            <person name="Braus G.H."/>
            <person name="Draht O."/>
            <person name="Busch S."/>
            <person name="D'Enfert C."/>
            <person name="Bouchier C."/>
            <person name="Goldman G.H."/>
            <person name="Bell-Pedersen D."/>
            <person name="Griffiths-Jones S."/>
            <person name="Doonan J.H."/>
            <person name="Yu J."/>
            <person name="Vienken K."/>
            <person name="Pain A."/>
            <person name="Freitag M."/>
            <person name="Selker E.U."/>
            <person name="Archer D.B."/>
            <person name="Penalva M.A."/>
            <person name="Oakley B.R."/>
            <person name="Momany M."/>
            <person name="Tanaka T."/>
            <person name="Kumagai T."/>
            <person name="Asai K."/>
            <person name="Machida M."/>
            <person name="Nierman W.C."/>
            <person name="Denning D.W."/>
            <person name="Caddick M.X."/>
            <person name="Hynes M."/>
            <person name="Paoletti M."/>
            <person name="Fischer R."/>
            <person name="Miller B.L."/>
            <person name="Dyer P.S."/>
            <person name="Sachs M.S."/>
            <person name="Osmani S.A."/>
            <person name="Birren B.W."/>
        </authorList>
    </citation>
    <scope>NUCLEOTIDE SEQUENCE [LARGE SCALE GENOMIC DNA]</scope>
    <source>
        <strain>FGSC A4 / ATCC 38163 / CBS 112.46 / NRRL 194 / M139</strain>
    </source>
</reference>
<reference key="2">
    <citation type="journal article" date="2009" name="Fungal Genet. Biol.">
        <title>The 2008 update of the Aspergillus nidulans genome annotation: a community effort.</title>
        <authorList>
            <person name="Wortman J.R."/>
            <person name="Gilsenan J.M."/>
            <person name="Joardar V."/>
            <person name="Deegan J."/>
            <person name="Clutterbuck J."/>
            <person name="Andersen M.R."/>
            <person name="Archer D."/>
            <person name="Bencina M."/>
            <person name="Braus G."/>
            <person name="Coutinho P."/>
            <person name="von Dohren H."/>
            <person name="Doonan J."/>
            <person name="Driessen A.J."/>
            <person name="Durek P."/>
            <person name="Espeso E."/>
            <person name="Fekete E."/>
            <person name="Flipphi M."/>
            <person name="Estrada C.G."/>
            <person name="Geysens S."/>
            <person name="Goldman G."/>
            <person name="de Groot P.W."/>
            <person name="Hansen K."/>
            <person name="Harris S.D."/>
            <person name="Heinekamp T."/>
            <person name="Helmstaedt K."/>
            <person name="Henrissat B."/>
            <person name="Hofmann G."/>
            <person name="Homan T."/>
            <person name="Horio T."/>
            <person name="Horiuchi H."/>
            <person name="James S."/>
            <person name="Jones M."/>
            <person name="Karaffa L."/>
            <person name="Karanyi Z."/>
            <person name="Kato M."/>
            <person name="Keller N."/>
            <person name="Kelly D.E."/>
            <person name="Kiel J.A."/>
            <person name="Kim J.M."/>
            <person name="van der Klei I.J."/>
            <person name="Klis F.M."/>
            <person name="Kovalchuk A."/>
            <person name="Krasevec N."/>
            <person name="Kubicek C.P."/>
            <person name="Liu B."/>
            <person name="Maccabe A."/>
            <person name="Meyer V."/>
            <person name="Mirabito P."/>
            <person name="Miskei M."/>
            <person name="Mos M."/>
            <person name="Mullins J."/>
            <person name="Nelson D.R."/>
            <person name="Nielsen J."/>
            <person name="Oakley B.R."/>
            <person name="Osmani S.A."/>
            <person name="Pakula T."/>
            <person name="Paszewski A."/>
            <person name="Paulsen I."/>
            <person name="Pilsyk S."/>
            <person name="Pocsi I."/>
            <person name="Punt P.J."/>
            <person name="Ram A.F."/>
            <person name="Ren Q."/>
            <person name="Robellet X."/>
            <person name="Robson G."/>
            <person name="Seiboth B."/>
            <person name="van Solingen P."/>
            <person name="Specht T."/>
            <person name="Sun J."/>
            <person name="Taheri-Talesh N."/>
            <person name="Takeshita N."/>
            <person name="Ussery D."/>
            <person name="vanKuyk P.A."/>
            <person name="Visser H."/>
            <person name="van de Vondervoort P.J."/>
            <person name="de Vries R.P."/>
            <person name="Walton J."/>
            <person name="Xiang X."/>
            <person name="Xiong Y."/>
            <person name="Zeng A.P."/>
            <person name="Brandt B.W."/>
            <person name="Cornell M.J."/>
            <person name="van den Hondel C.A."/>
            <person name="Visser J."/>
            <person name="Oliver S.G."/>
            <person name="Turner G."/>
        </authorList>
    </citation>
    <scope>GENOME REANNOTATION</scope>
    <source>
        <strain>FGSC A4 / ATCC 38163 / CBS 112.46 / NRRL 194 / M139</strain>
    </source>
</reference>
<proteinExistence type="inferred from homology"/>